<name>FTSQ_ROSLO</name>
<protein>
    <recommendedName>
        <fullName evidence="1">Cell division protein FtsQ</fullName>
    </recommendedName>
</protein>
<keyword id="KW-0131">Cell cycle</keyword>
<keyword id="KW-0132">Cell division</keyword>
<keyword id="KW-0997">Cell inner membrane</keyword>
<keyword id="KW-1003">Cell membrane</keyword>
<keyword id="KW-0472">Membrane</keyword>
<keyword id="KW-0812">Transmembrane</keyword>
<keyword id="KW-1133">Transmembrane helix</keyword>
<organism>
    <name type="scientific">Roseobacter litoralis (strain ATCC 49566 / DSM 6996 / JCM 21268 / NBRC 15278 / OCh 149)</name>
    <dbReference type="NCBI Taxonomy" id="391595"/>
    <lineage>
        <taxon>Bacteria</taxon>
        <taxon>Pseudomonadati</taxon>
        <taxon>Pseudomonadota</taxon>
        <taxon>Alphaproteobacteria</taxon>
        <taxon>Rhodobacterales</taxon>
        <taxon>Roseobacteraceae</taxon>
        <taxon>Roseobacter</taxon>
    </lineage>
</organism>
<accession>F7ZDD2</accession>
<dbReference type="EMBL" id="CP002623">
    <property type="protein sequence ID" value="AEI94534.1"/>
    <property type="molecule type" value="Genomic_DNA"/>
</dbReference>
<dbReference type="RefSeq" id="WP_013962455.1">
    <property type="nucleotide sequence ID" value="NC_015730.1"/>
</dbReference>
<dbReference type="SMR" id="F7ZDD2"/>
<dbReference type="STRING" id="391595.RLO149_c025660"/>
<dbReference type="KEGG" id="rli:RLO149_c025660"/>
<dbReference type="eggNOG" id="COG1589">
    <property type="taxonomic scope" value="Bacteria"/>
</dbReference>
<dbReference type="HOGENOM" id="CLU_061141_0_0_5"/>
<dbReference type="OrthoDB" id="9783091at2"/>
<dbReference type="Proteomes" id="UP000001353">
    <property type="component" value="Chromosome"/>
</dbReference>
<dbReference type="GO" id="GO:0032153">
    <property type="term" value="C:cell division site"/>
    <property type="evidence" value="ECO:0007669"/>
    <property type="project" value="UniProtKB-UniRule"/>
</dbReference>
<dbReference type="GO" id="GO:0005886">
    <property type="term" value="C:plasma membrane"/>
    <property type="evidence" value="ECO:0007669"/>
    <property type="project" value="UniProtKB-SubCell"/>
</dbReference>
<dbReference type="GO" id="GO:0090529">
    <property type="term" value="P:cell septum assembly"/>
    <property type="evidence" value="ECO:0007669"/>
    <property type="project" value="InterPro"/>
</dbReference>
<dbReference type="GO" id="GO:0043093">
    <property type="term" value="P:FtsZ-dependent cytokinesis"/>
    <property type="evidence" value="ECO:0007669"/>
    <property type="project" value="UniProtKB-UniRule"/>
</dbReference>
<dbReference type="Gene3D" id="3.40.50.11690">
    <property type="entry name" value="Cell division protein FtsQ/DivIB"/>
    <property type="match status" value="1"/>
</dbReference>
<dbReference type="HAMAP" id="MF_00911">
    <property type="entry name" value="FtsQ_subfam"/>
    <property type="match status" value="1"/>
</dbReference>
<dbReference type="InterPro" id="IPR005548">
    <property type="entry name" value="Cell_div_FtsQ/DivIB_C"/>
</dbReference>
<dbReference type="InterPro" id="IPR026579">
    <property type="entry name" value="FtsQ"/>
</dbReference>
<dbReference type="InterPro" id="IPR045335">
    <property type="entry name" value="FtsQ_C_sf"/>
</dbReference>
<dbReference type="InterPro" id="IPR034746">
    <property type="entry name" value="POTRA"/>
</dbReference>
<dbReference type="PANTHER" id="PTHR35851">
    <property type="entry name" value="CELL DIVISION PROTEIN FTSQ"/>
    <property type="match status" value="1"/>
</dbReference>
<dbReference type="PANTHER" id="PTHR35851:SF1">
    <property type="entry name" value="CELL DIVISION PROTEIN FTSQ"/>
    <property type="match status" value="1"/>
</dbReference>
<dbReference type="Pfam" id="PF03799">
    <property type="entry name" value="FtsQ_DivIB_C"/>
    <property type="match status" value="1"/>
</dbReference>
<dbReference type="PROSITE" id="PS51779">
    <property type="entry name" value="POTRA"/>
    <property type="match status" value="1"/>
</dbReference>
<comment type="function">
    <text evidence="1">Essential cell division protein.</text>
</comment>
<comment type="subcellular location">
    <subcellularLocation>
        <location evidence="1">Cell inner membrane</location>
        <topology evidence="1">Single-pass type II membrane protein</topology>
    </subcellularLocation>
    <text evidence="1">Localizes to the division septum.</text>
</comment>
<comment type="similarity">
    <text evidence="1">Belongs to the FtsQ/DivIB family. FtsQ subfamily.</text>
</comment>
<proteinExistence type="inferred from homology"/>
<feature type="chain" id="PRO_0000414691" description="Cell division protein FtsQ">
    <location>
        <begin position="1"/>
        <end position="293"/>
    </location>
</feature>
<feature type="topological domain" description="Cytoplasmic" evidence="1">
    <location>
        <begin position="1"/>
        <end position="27"/>
    </location>
</feature>
<feature type="transmembrane region" description="Helical" evidence="1">
    <location>
        <begin position="28"/>
        <end position="48"/>
    </location>
</feature>
<feature type="topological domain" description="Periplasmic" evidence="1">
    <location>
        <begin position="49"/>
        <end position="293"/>
    </location>
</feature>
<feature type="domain" description="POTRA" evidence="2">
    <location>
        <begin position="81"/>
        <end position="149"/>
    </location>
</feature>
<evidence type="ECO:0000255" key="1">
    <source>
        <dbReference type="HAMAP-Rule" id="MF_00911"/>
    </source>
</evidence>
<evidence type="ECO:0000255" key="2">
    <source>
        <dbReference type="PROSITE-ProRule" id="PRU01115"/>
    </source>
</evidence>
<gene>
    <name evidence="1" type="primary">ftsQ</name>
    <name type="ordered locus">RLO149_c025660</name>
</gene>
<sequence length="293" mass="32980">MRPLMRNRASERGVDPAPSRWAWRMQRLLLTPAFLLFLRAGVPVLVLFGAATWWLSDTDRRAAIWETVAEARASFETRPEFMVQLMAVDGATDALAAEIRKEVPLDFPLSSFDLNLSDMRDRIVALDPVKSATVRIRPGGVLHIDVEPRIPVVIWRNPQGLTAVDVNGIHVGPIAQRMDRPDLPLIAGTGATEHVKEALNLYRAAGPLGTRLRGIVRVGERRWDIVLDRDQRIMLPKEGPVEALDRVIALDTAQDILSRDVNRVDLRLGARPTVKMSDYATNVWWEIRQVSRQ</sequence>
<reference key="1">
    <citation type="journal article" date="2011" name="BMC Genomics">
        <title>Comparative genome analysis and genome-guided physiological analysis of Roseobacter litoralis.</title>
        <authorList>
            <person name="Kalhoefer D."/>
            <person name="Thole S."/>
            <person name="Voget S."/>
            <person name="Lehmann R."/>
            <person name="Liesegang H."/>
            <person name="Wollher A."/>
            <person name="Daniel R."/>
            <person name="Simon M."/>
            <person name="Brinkhoff T."/>
        </authorList>
    </citation>
    <scope>NUCLEOTIDE SEQUENCE [LARGE SCALE GENOMIC DNA]</scope>
    <source>
        <strain>ATCC 49566 / DSM 6996 / JCM 21268 / NBRC 15278 / OCh 149</strain>
    </source>
</reference>